<gene>
    <name evidence="2" type="primary">rpoA</name>
    <name type="ordered locus">XAC0996</name>
</gene>
<comment type="function">
    <text evidence="2">DNA-dependent RNA polymerase catalyzes the transcription of DNA into RNA using the four ribonucleoside triphosphates as substrates.</text>
</comment>
<comment type="catalytic activity">
    <reaction evidence="2">
        <text>RNA(n) + a ribonucleoside 5'-triphosphate = RNA(n+1) + diphosphate</text>
        <dbReference type="Rhea" id="RHEA:21248"/>
        <dbReference type="Rhea" id="RHEA-COMP:14527"/>
        <dbReference type="Rhea" id="RHEA-COMP:17342"/>
        <dbReference type="ChEBI" id="CHEBI:33019"/>
        <dbReference type="ChEBI" id="CHEBI:61557"/>
        <dbReference type="ChEBI" id="CHEBI:140395"/>
        <dbReference type="EC" id="2.7.7.6"/>
    </reaction>
</comment>
<comment type="subunit">
    <text evidence="2">Homodimer. The RNAP catalytic core consists of 2 alpha, 1 beta, 1 beta' and 1 omega subunit. When a sigma factor is associated with the core the holoenzyme is formed, which can initiate transcription.</text>
</comment>
<comment type="domain">
    <text evidence="2">The N-terminal domain is essential for RNAP assembly and basal transcription, whereas the C-terminal domain is involved in interaction with transcriptional regulators and with upstream promoter elements.</text>
</comment>
<comment type="similarity">
    <text evidence="2">Belongs to the RNA polymerase alpha chain family.</text>
</comment>
<sequence length="332" mass="36364">MTVTANQVLRPRGPQIERLTDNRAKVVIEPLERGYGHTLGNALRRVLLSSIPGFAITEVEIDGVLHEYTTVEGLQEDVLDVLLNLKDVAIRMHSGDSATLSLSKQGPGTVTAADIRTDHNVEIINGDHVICHLTKDTALNMRLKIERGFGYQPAAARRRPDEETRTIGRLMLDASFSPVRRVAYAVEAARVEQRTDLDKLVIDIETNGTIDAEEAVRTAADILSDQLSVFGDFTHRDRGAAKPAASGVDPVLLRPIDDLELTVRSANCLKAESIYYIGDLIQKTEVELLKTPNLGKKSLTEIKEVLAQRGLALGMKLENWPPAGVAQHGMLG</sequence>
<feature type="initiator methionine" description="Removed" evidence="1">
    <location>
        <position position="1"/>
    </location>
</feature>
<feature type="chain" id="PRO_0000175423" description="DNA-directed RNA polymerase subunit alpha">
    <location>
        <begin position="2"/>
        <end position="332"/>
    </location>
</feature>
<feature type="region of interest" description="Alpha N-terminal domain (alpha-NTD)" evidence="2">
    <location>
        <begin position="2"/>
        <end position="234"/>
    </location>
</feature>
<feature type="region of interest" description="Alpha C-terminal domain (alpha-CTD)" evidence="2">
    <location>
        <begin position="248"/>
        <end position="332"/>
    </location>
</feature>
<organism>
    <name type="scientific">Xanthomonas axonopodis pv. citri (strain 306)</name>
    <dbReference type="NCBI Taxonomy" id="190486"/>
    <lineage>
        <taxon>Bacteria</taxon>
        <taxon>Pseudomonadati</taxon>
        <taxon>Pseudomonadota</taxon>
        <taxon>Gammaproteobacteria</taxon>
        <taxon>Lysobacterales</taxon>
        <taxon>Lysobacteraceae</taxon>
        <taxon>Xanthomonas</taxon>
    </lineage>
</organism>
<proteinExistence type="inferred from homology"/>
<accession>P0A0Y2</accession>
<accession>Q9Z3E7</accession>
<keyword id="KW-0240">DNA-directed RNA polymerase</keyword>
<keyword id="KW-0548">Nucleotidyltransferase</keyword>
<keyword id="KW-0804">Transcription</keyword>
<keyword id="KW-0808">Transferase</keyword>
<reference key="1">
    <citation type="journal article" date="2002" name="Nature">
        <title>Comparison of the genomes of two Xanthomonas pathogens with differing host specificities.</title>
        <authorList>
            <person name="da Silva A.C.R."/>
            <person name="Ferro J.A."/>
            <person name="Reinach F.C."/>
            <person name="Farah C.S."/>
            <person name="Furlan L.R."/>
            <person name="Quaggio R.B."/>
            <person name="Monteiro-Vitorello C.B."/>
            <person name="Van Sluys M.A."/>
            <person name="Almeida N.F. Jr."/>
            <person name="Alves L.M.C."/>
            <person name="do Amaral A.M."/>
            <person name="Bertolini M.C."/>
            <person name="Camargo L.E.A."/>
            <person name="Camarotte G."/>
            <person name="Cannavan F."/>
            <person name="Cardozo J."/>
            <person name="Chambergo F."/>
            <person name="Ciapina L.P."/>
            <person name="Cicarelli R.M.B."/>
            <person name="Coutinho L.L."/>
            <person name="Cursino-Santos J.R."/>
            <person name="El-Dorry H."/>
            <person name="Faria J.B."/>
            <person name="Ferreira A.J.S."/>
            <person name="Ferreira R.C.C."/>
            <person name="Ferro M.I.T."/>
            <person name="Formighieri E.F."/>
            <person name="Franco M.C."/>
            <person name="Greggio C.C."/>
            <person name="Gruber A."/>
            <person name="Katsuyama A.M."/>
            <person name="Kishi L.T."/>
            <person name="Leite R.P."/>
            <person name="Lemos E.G.M."/>
            <person name="Lemos M.V.F."/>
            <person name="Locali E.C."/>
            <person name="Machado M.A."/>
            <person name="Madeira A.M.B.N."/>
            <person name="Martinez-Rossi N.M."/>
            <person name="Martins E.C."/>
            <person name="Meidanis J."/>
            <person name="Menck C.F.M."/>
            <person name="Miyaki C.Y."/>
            <person name="Moon D.H."/>
            <person name="Moreira L.M."/>
            <person name="Novo M.T.M."/>
            <person name="Okura V.K."/>
            <person name="Oliveira M.C."/>
            <person name="Oliveira V.R."/>
            <person name="Pereira H.A."/>
            <person name="Rossi A."/>
            <person name="Sena J.A.D."/>
            <person name="Silva C."/>
            <person name="de Souza R.F."/>
            <person name="Spinola L.A.F."/>
            <person name="Takita M.A."/>
            <person name="Tamura R.E."/>
            <person name="Teixeira E.C."/>
            <person name="Tezza R.I.D."/>
            <person name="Trindade dos Santos M."/>
            <person name="Truffi D."/>
            <person name="Tsai S.M."/>
            <person name="White F.F."/>
            <person name="Setubal J.C."/>
            <person name="Kitajima J.P."/>
        </authorList>
    </citation>
    <scope>NUCLEOTIDE SEQUENCE [LARGE SCALE GENOMIC DNA]</scope>
    <source>
        <strain>306</strain>
    </source>
</reference>
<evidence type="ECO:0000250" key="1"/>
<evidence type="ECO:0000255" key="2">
    <source>
        <dbReference type="HAMAP-Rule" id="MF_00059"/>
    </source>
</evidence>
<name>RPOA_XANAC</name>
<protein>
    <recommendedName>
        <fullName evidence="2">DNA-directed RNA polymerase subunit alpha</fullName>
        <shortName evidence="2">RNAP subunit alpha</shortName>
        <ecNumber evidence="2">2.7.7.6</ecNumber>
    </recommendedName>
    <alternativeName>
        <fullName evidence="2">RNA polymerase subunit alpha</fullName>
    </alternativeName>
    <alternativeName>
        <fullName evidence="2">Transcriptase subunit alpha</fullName>
    </alternativeName>
</protein>
<dbReference type="EC" id="2.7.7.6" evidence="2"/>
<dbReference type="EMBL" id="AE008923">
    <property type="protein sequence ID" value="AAM35879.1"/>
    <property type="molecule type" value="Genomic_DNA"/>
</dbReference>
<dbReference type="RefSeq" id="WP_002811635.1">
    <property type="nucleotide sequence ID" value="NC_003919.1"/>
</dbReference>
<dbReference type="SMR" id="P0A0Y2"/>
<dbReference type="KEGG" id="xac:XAC0996"/>
<dbReference type="eggNOG" id="COG0202">
    <property type="taxonomic scope" value="Bacteria"/>
</dbReference>
<dbReference type="HOGENOM" id="CLU_053084_0_1_6"/>
<dbReference type="Proteomes" id="UP000000576">
    <property type="component" value="Chromosome"/>
</dbReference>
<dbReference type="GO" id="GO:0005737">
    <property type="term" value="C:cytoplasm"/>
    <property type="evidence" value="ECO:0007669"/>
    <property type="project" value="UniProtKB-ARBA"/>
</dbReference>
<dbReference type="GO" id="GO:0000428">
    <property type="term" value="C:DNA-directed RNA polymerase complex"/>
    <property type="evidence" value="ECO:0007669"/>
    <property type="project" value="UniProtKB-KW"/>
</dbReference>
<dbReference type="GO" id="GO:0003677">
    <property type="term" value="F:DNA binding"/>
    <property type="evidence" value="ECO:0007669"/>
    <property type="project" value="UniProtKB-UniRule"/>
</dbReference>
<dbReference type="GO" id="GO:0003899">
    <property type="term" value="F:DNA-directed RNA polymerase activity"/>
    <property type="evidence" value="ECO:0007669"/>
    <property type="project" value="UniProtKB-UniRule"/>
</dbReference>
<dbReference type="GO" id="GO:0046983">
    <property type="term" value="F:protein dimerization activity"/>
    <property type="evidence" value="ECO:0007669"/>
    <property type="project" value="InterPro"/>
</dbReference>
<dbReference type="GO" id="GO:0006351">
    <property type="term" value="P:DNA-templated transcription"/>
    <property type="evidence" value="ECO:0007669"/>
    <property type="project" value="UniProtKB-UniRule"/>
</dbReference>
<dbReference type="CDD" id="cd06928">
    <property type="entry name" value="RNAP_alpha_NTD"/>
    <property type="match status" value="1"/>
</dbReference>
<dbReference type="FunFam" id="1.10.150.20:FF:000001">
    <property type="entry name" value="DNA-directed RNA polymerase subunit alpha"/>
    <property type="match status" value="1"/>
</dbReference>
<dbReference type="FunFam" id="2.170.120.12:FF:000001">
    <property type="entry name" value="DNA-directed RNA polymerase subunit alpha"/>
    <property type="match status" value="1"/>
</dbReference>
<dbReference type="Gene3D" id="1.10.150.20">
    <property type="entry name" value="5' to 3' exonuclease, C-terminal subdomain"/>
    <property type="match status" value="1"/>
</dbReference>
<dbReference type="Gene3D" id="2.170.120.12">
    <property type="entry name" value="DNA-directed RNA polymerase, insert domain"/>
    <property type="match status" value="1"/>
</dbReference>
<dbReference type="Gene3D" id="3.30.1360.10">
    <property type="entry name" value="RNA polymerase, RBP11-like subunit"/>
    <property type="match status" value="1"/>
</dbReference>
<dbReference type="HAMAP" id="MF_00059">
    <property type="entry name" value="RNApol_bact_RpoA"/>
    <property type="match status" value="1"/>
</dbReference>
<dbReference type="InterPro" id="IPR011262">
    <property type="entry name" value="DNA-dir_RNA_pol_insert"/>
</dbReference>
<dbReference type="InterPro" id="IPR011263">
    <property type="entry name" value="DNA-dir_RNA_pol_RpoA/D/Rpb3"/>
</dbReference>
<dbReference type="InterPro" id="IPR011773">
    <property type="entry name" value="DNA-dir_RpoA"/>
</dbReference>
<dbReference type="InterPro" id="IPR036603">
    <property type="entry name" value="RBP11-like"/>
</dbReference>
<dbReference type="InterPro" id="IPR011260">
    <property type="entry name" value="RNAP_asu_C"/>
</dbReference>
<dbReference type="InterPro" id="IPR036643">
    <property type="entry name" value="RNApol_insert_sf"/>
</dbReference>
<dbReference type="NCBIfam" id="NF003513">
    <property type="entry name" value="PRK05182.1-2"/>
    <property type="match status" value="1"/>
</dbReference>
<dbReference type="NCBIfam" id="NF003519">
    <property type="entry name" value="PRK05182.2-5"/>
    <property type="match status" value="1"/>
</dbReference>
<dbReference type="NCBIfam" id="TIGR02027">
    <property type="entry name" value="rpoA"/>
    <property type="match status" value="1"/>
</dbReference>
<dbReference type="Pfam" id="PF01000">
    <property type="entry name" value="RNA_pol_A_bac"/>
    <property type="match status" value="1"/>
</dbReference>
<dbReference type="Pfam" id="PF03118">
    <property type="entry name" value="RNA_pol_A_CTD"/>
    <property type="match status" value="1"/>
</dbReference>
<dbReference type="Pfam" id="PF01193">
    <property type="entry name" value="RNA_pol_L"/>
    <property type="match status" value="1"/>
</dbReference>
<dbReference type="SMART" id="SM00662">
    <property type="entry name" value="RPOLD"/>
    <property type="match status" value="1"/>
</dbReference>
<dbReference type="SUPFAM" id="SSF47789">
    <property type="entry name" value="C-terminal domain of RNA polymerase alpha subunit"/>
    <property type="match status" value="1"/>
</dbReference>
<dbReference type="SUPFAM" id="SSF56553">
    <property type="entry name" value="Insert subdomain of RNA polymerase alpha subunit"/>
    <property type="match status" value="1"/>
</dbReference>
<dbReference type="SUPFAM" id="SSF55257">
    <property type="entry name" value="RBP11-like subunits of RNA polymerase"/>
    <property type="match status" value="1"/>
</dbReference>